<protein>
    <recommendedName>
        <fullName evidence="2">NADH-quinone oxidoreductase subunit B 1</fullName>
        <ecNumber evidence="2">7.1.1.-</ecNumber>
    </recommendedName>
    <alternativeName>
        <fullName evidence="2">NADH dehydrogenase I subunit B 1</fullName>
    </alternativeName>
    <alternativeName>
        <fullName evidence="2">NDH-1 subunit B 1</fullName>
    </alternativeName>
</protein>
<dbReference type="EC" id="7.1.1.-" evidence="2"/>
<dbReference type="EMBL" id="CP000546">
    <property type="protein sequence ID" value="ABN02989.1"/>
    <property type="molecule type" value="Genomic_DNA"/>
</dbReference>
<dbReference type="RefSeq" id="WP_004186402.1">
    <property type="nucleotide sequence ID" value="NC_008836.1"/>
</dbReference>
<dbReference type="SMR" id="A2S458"/>
<dbReference type="KEGG" id="bml:BMA10229_A0736"/>
<dbReference type="HOGENOM" id="CLU_055737_7_3_4"/>
<dbReference type="Proteomes" id="UP000002283">
    <property type="component" value="Chromosome I"/>
</dbReference>
<dbReference type="GO" id="GO:0005886">
    <property type="term" value="C:plasma membrane"/>
    <property type="evidence" value="ECO:0007669"/>
    <property type="project" value="UniProtKB-SubCell"/>
</dbReference>
<dbReference type="GO" id="GO:0045271">
    <property type="term" value="C:respiratory chain complex I"/>
    <property type="evidence" value="ECO:0007669"/>
    <property type="project" value="TreeGrafter"/>
</dbReference>
<dbReference type="GO" id="GO:0051539">
    <property type="term" value="F:4 iron, 4 sulfur cluster binding"/>
    <property type="evidence" value="ECO:0007669"/>
    <property type="project" value="UniProtKB-KW"/>
</dbReference>
<dbReference type="GO" id="GO:0005506">
    <property type="term" value="F:iron ion binding"/>
    <property type="evidence" value="ECO:0007669"/>
    <property type="project" value="UniProtKB-UniRule"/>
</dbReference>
<dbReference type="GO" id="GO:0008137">
    <property type="term" value="F:NADH dehydrogenase (ubiquinone) activity"/>
    <property type="evidence" value="ECO:0007669"/>
    <property type="project" value="InterPro"/>
</dbReference>
<dbReference type="GO" id="GO:0050136">
    <property type="term" value="F:NADH:ubiquinone reductase (non-electrogenic) activity"/>
    <property type="evidence" value="ECO:0007669"/>
    <property type="project" value="UniProtKB-UniRule"/>
</dbReference>
<dbReference type="GO" id="GO:0048038">
    <property type="term" value="F:quinone binding"/>
    <property type="evidence" value="ECO:0007669"/>
    <property type="project" value="UniProtKB-KW"/>
</dbReference>
<dbReference type="GO" id="GO:0009060">
    <property type="term" value="P:aerobic respiration"/>
    <property type="evidence" value="ECO:0007669"/>
    <property type="project" value="TreeGrafter"/>
</dbReference>
<dbReference type="GO" id="GO:0015990">
    <property type="term" value="P:electron transport coupled proton transport"/>
    <property type="evidence" value="ECO:0007669"/>
    <property type="project" value="TreeGrafter"/>
</dbReference>
<dbReference type="FunFam" id="3.40.50.12280:FF:000001">
    <property type="entry name" value="NADH-quinone oxidoreductase subunit B 2"/>
    <property type="match status" value="1"/>
</dbReference>
<dbReference type="Gene3D" id="3.40.50.12280">
    <property type="match status" value="1"/>
</dbReference>
<dbReference type="HAMAP" id="MF_01356">
    <property type="entry name" value="NDH1_NuoB"/>
    <property type="match status" value="1"/>
</dbReference>
<dbReference type="InterPro" id="IPR006137">
    <property type="entry name" value="NADH_UbQ_OxRdtase-like_20kDa"/>
</dbReference>
<dbReference type="InterPro" id="IPR006138">
    <property type="entry name" value="NADH_UQ_OxRdtase_20Kd_su"/>
</dbReference>
<dbReference type="NCBIfam" id="TIGR01957">
    <property type="entry name" value="nuoB_fam"/>
    <property type="match status" value="1"/>
</dbReference>
<dbReference type="NCBIfam" id="NF005012">
    <property type="entry name" value="PRK06411.1"/>
    <property type="match status" value="1"/>
</dbReference>
<dbReference type="PANTHER" id="PTHR11995">
    <property type="entry name" value="NADH DEHYDROGENASE"/>
    <property type="match status" value="1"/>
</dbReference>
<dbReference type="PANTHER" id="PTHR11995:SF14">
    <property type="entry name" value="NADH DEHYDROGENASE [UBIQUINONE] IRON-SULFUR PROTEIN 7, MITOCHONDRIAL"/>
    <property type="match status" value="1"/>
</dbReference>
<dbReference type="Pfam" id="PF01058">
    <property type="entry name" value="Oxidored_q6"/>
    <property type="match status" value="1"/>
</dbReference>
<dbReference type="SUPFAM" id="SSF56770">
    <property type="entry name" value="HydA/Nqo6-like"/>
    <property type="match status" value="1"/>
</dbReference>
<dbReference type="PROSITE" id="PS01150">
    <property type="entry name" value="COMPLEX1_20K"/>
    <property type="match status" value="1"/>
</dbReference>
<accession>A2S458</accession>
<reference key="1">
    <citation type="journal article" date="2010" name="Genome Biol. Evol.">
        <title>Continuing evolution of Burkholderia mallei through genome reduction and large-scale rearrangements.</title>
        <authorList>
            <person name="Losada L."/>
            <person name="Ronning C.M."/>
            <person name="DeShazer D."/>
            <person name="Woods D."/>
            <person name="Fedorova N."/>
            <person name="Kim H.S."/>
            <person name="Shabalina S.A."/>
            <person name="Pearson T.R."/>
            <person name="Brinkac L."/>
            <person name="Tan P."/>
            <person name="Nandi T."/>
            <person name="Crabtree J."/>
            <person name="Badger J."/>
            <person name="Beckstrom-Sternberg S."/>
            <person name="Saqib M."/>
            <person name="Schutzer S.E."/>
            <person name="Keim P."/>
            <person name="Nierman W.C."/>
        </authorList>
    </citation>
    <scope>NUCLEOTIDE SEQUENCE [LARGE SCALE GENOMIC DNA]</scope>
    <source>
        <strain>NCTC 10229</strain>
    </source>
</reference>
<evidence type="ECO:0000250" key="1"/>
<evidence type="ECO:0000255" key="2">
    <source>
        <dbReference type="HAMAP-Rule" id="MF_01356"/>
    </source>
</evidence>
<keyword id="KW-0004">4Fe-4S</keyword>
<keyword id="KW-0997">Cell inner membrane</keyword>
<keyword id="KW-1003">Cell membrane</keyword>
<keyword id="KW-0408">Iron</keyword>
<keyword id="KW-0411">Iron-sulfur</keyword>
<keyword id="KW-0472">Membrane</keyword>
<keyword id="KW-0479">Metal-binding</keyword>
<keyword id="KW-0520">NAD</keyword>
<keyword id="KW-0874">Quinone</keyword>
<keyword id="KW-1278">Translocase</keyword>
<keyword id="KW-0813">Transport</keyword>
<keyword id="KW-0830">Ubiquinone</keyword>
<sequence length="159" mass="17533">MSIEGVLKEGFVTTTADKLINWTRTGSLWPMTFGLACCAVEMMHAGAARYDLDRFGVVFRPSPRQSDVMIVAGTLCNKMAPALRRVYDQMAEPRWVISMGSCANGGGYYHYSYSVVRGCDRIVPVDVYVPGCPPTAEALVYGVIQLQAKIRRTSTIARQ</sequence>
<gene>
    <name evidence="2" type="primary">nuoB1</name>
    <name type="ordered locus">BMA10229_A0736</name>
</gene>
<comment type="function">
    <text evidence="1">NDH-1 shuttles electrons from NADH, via FMN and iron-sulfur (Fe-S) centers, to quinones in the respiratory chain. Couples the redox reaction to proton translocation (for every two electrons transferred, four hydrogen ions are translocated across the cytoplasmic membrane), and thus conserves the redox energy in a proton gradient (By similarity).</text>
</comment>
<comment type="catalytic activity">
    <reaction evidence="2">
        <text>a quinone + NADH + 5 H(+)(in) = a quinol + NAD(+) + 4 H(+)(out)</text>
        <dbReference type="Rhea" id="RHEA:57888"/>
        <dbReference type="ChEBI" id="CHEBI:15378"/>
        <dbReference type="ChEBI" id="CHEBI:24646"/>
        <dbReference type="ChEBI" id="CHEBI:57540"/>
        <dbReference type="ChEBI" id="CHEBI:57945"/>
        <dbReference type="ChEBI" id="CHEBI:132124"/>
    </reaction>
</comment>
<comment type="cofactor">
    <cofactor evidence="2">
        <name>[4Fe-4S] cluster</name>
        <dbReference type="ChEBI" id="CHEBI:49883"/>
    </cofactor>
    <text evidence="2">Binds 1 [4Fe-4S] cluster.</text>
</comment>
<comment type="subunit">
    <text evidence="2">NDH-1 is composed of 14 different subunits. Subunits NuoB, C, D, E, F, and G constitute the peripheral sector of the complex.</text>
</comment>
<comment type="subcellular location">
    <subcellularLocation>
        <location evidence="2">Cell inner membrane</location>
        <topology evidence="2">Peripheral membrane protein</topology>
        <orientation evidence="2">Cytoplasmic side</orientation>
    </subcellularLocation>
</comment>
<comment type="similarity">
    <text evidence="2">Belongs to the complex I 20 kDa subunit family.</text>
</comment>
<proteinExistence type="inferred from homology"/>
<feature type="chain" id="PRO_0000358371" description="NADH-quinone oxidoreductase subunit B 1">
    <location>
        <begin position="1"/>
        <end position="159"/>
    </location>
</feature>
<feature type="binding site" evidence="2">
    <location>
        <position position="37"/>
    </location>
    <ligand>
        <name>[4Fe-4S] cluster</name>
        <dbReference type="ChEBI" id="CHEBI:49883"/>
    </ligand>
</feature>
<feature type="binding site" evidence="2">
    <location>
        <position position="38"/>
    </location>
    <ligand>
        <name>[4Fe-4S] cluster</name>
        <dbReference type="ChEBI" id="CHEBI:49883"/>
    </ligand>
</feature>
<feature type="binding site" evidence="2">
    <location>
        <position position="102"/>
    </location>
    <ligand>
        <name>[4Fe-4S] cluster</name>
        <dbReference type="ChEBI" id="CHEBI:49883"/>
    </ligand>
</feature>
<feature type="binding site" evidence="2">
    <location>
        <position position="132"/>
    </location>
    <ligand>
        <name>[4Fe-4S] cluster</name>
        <dbReference type="ChEBI" id="CHEBI:49883"/>
    </ligand>
</feature>
<organism>
    <name type="scientific">Burkholderia mallei (strain NCTC 10229)</name>
    <dbReference type="NCBI Taxonomy" id="412022"/>
    <lineage>
        <taxon>Bacteria</taxon>
        <taxon>Pseudomonadati</taxon>
        <taxon>Pseudomonadota</taxon>
        <taxon>Betaproteobacteria</taxon>
        <taxon>Burkholderiales</taxon>
        <taxon>Burkholderiaceae</taxon>
        <taxon>Burkholderia</taxon>
        <taxon>pseudomallei group</taxon>
    </lineage>
</organism>
<name>NUOB1_BURM9</name>